<gene>
    <name evidence="1" type="primary">cidA</name>
    <name type="ordered locus">SAHV_2525</name>
</gene>
<comment type="function">
    <text evidence="1">Increases the activity of extracellular murein hydrolases possibly by mediating their export via hole formation. Inhibited by the antiholin-like proteins LrgAB. In an unstressed cell, the LrgAB products probably inhibit the function of the CidAB proteins. When a cell is stressed by the addition of antibiotics or by other factors in the environment, the CidAB proteins possibly oligomerize within the bacterial cell membrane, creating lesions that disrupt the proton motive force, which in turn results in loss of cell viability. These lesions are also hypothesized to regulate the subsequent cell lysis by either allowing the murein hydrolases access to the cell wall substrate and/or regulating their activity by a possible change in the cell wall pH that results from loss of membrane potential.</text>
</comment>
<comment type="subcellular location">
    <subcellularLocation>
        <location evidence="1">Cell membrane</location>
        <topology evidence="1">Multi-pass membrane protein</topology>
    </subcellularLocation>
</comment>
<comment type="similarity">
    <text evidence="1">Belongs to the CidA/LrgA family. CidA subfamily.</text>
</comment>
<reference key="1">
    <citation type="journal article" date="2008" name="Antimicrob. Agents Chemother.">
        <title>Mutated response regulator graR is responsible for phenotypic conversion of Staphylococcus aureus from heterogeneous vancomycin-intermediate resistance to vancomycin-intermediate resistance.</title>
        <authorList>
            <person name="Neoh H.-M."/>
            <person name="Cui L."/>
            <person name="Yuzawa H."/>
            <person name="Takeuchi F."/>
            <person name="Matsuo M."/>
            <person name="Hiramatsu K."/>
        </authorList>
    </citation>
    <scope>NUCLEOTIDE SEQUENCE [LARGE SCALE GENOMIC DNA]</scope>
    <source>
        <strain>Mu3 / ATCC 700698</strain>
    </source>
</reference>
<accession>A7X6P6</accession>
<keyword id="KW-1003">Cell membrane</keyword>
<keyword id="KW-0204">Cytolysis</keyword>
<keyword id="KW-0472">Membrane</keyword>
<keyword id="KW-0812">Transmembrane</keyword>
<keyword id="KW-1133">Transmembrane helix</keyword>
<dbReference type="EMBL" id="AP009324">
    <property type="protein sequence ID" value="BAF79408.1"/>
    <property type="molecule type" value="Genomic_DNA"/>
</dbReference>
<dbReference type="RefSeq" id="WP_000549734.1">
    <property type="nucleotide sequence ID" value="NC_009782.1"/>
</dbReference>
<dbReference type="SMR" id="A7X6P6"/>
<dbReference type="KEGG" id="saw:SAHV_2525"/>
<dbReference type="HOGENOM" id="CLU_113736_2_1_9"/>
<dbReference type="GO" id="GO:0005886">
    <property type="term" value="C:plasma membrane"/>
    <property type="evidence" value="ECO:0007669"/>
    <property type="project" value="UniProtKB-SubCell"/>
</dbReference>
<dbReference type="GO" id="GO:0019835">
    <property type="term" value="P:cytolysis"/>
    <property type="evidence" value="ECO:0007669"/>
    <property type="project" value="UniProtKB-UniRule"/>
</dbReference>
<dbReference type="GO" id="GO:0031640">
    <property type="term" value="P:killing of cells of another organism"/>
    <property type="evidence" value="ECO:0007669"/>
    <property type="project" value="UniProtKB-KW"/>
</dbReference>
<dbReference type="GO" id="GO:0012501">
    <property type="term" value="P:programmed cell death"/>
    <property type="evidence" value="ECO:0007669"/>
    <property type="project" value="UniProtKB-UniRule"/>
</dbReference>
<dbReference type="HAMAP" id="MF_01143">
    <property type="entry name" value="CidA"/>
    <property type="match status" value="1"/>
</dbReference>
<dbReference type="InterPro" id="IPR023760">
    <property type="entry name" value="Holin-like_CidA"/>
</dbReference>
<dbReference type="InterPro" id="IPR005538">
    <property type="entry name" value="LrgA/CidA"/>
</dbReference>
<dbReference type="PANTHER" id="PTHR33931:SF2">
    <property type="entry name" value="HOLIN-LIKE PROTEIN CIDA"/>
    <property type="match status" value="1"/>
</dbReference>
<dbReference type="PANTHER" id="PTHR33931">
    <property type="entry name" value="HOLIN-LIKE PROTEIN CIDA-RELATED"/>
    <property type="match status" value="1"/>
</dbReference>
<dbReference type="Pfam" id="PF03788">
    <property type="entry name" value="LrgA"/>
    <property type="match status" value="1"/>
</dbReference>
<protein>
    <recommendedName>
        <fullName evidence="1">Holin-like protein CidA</fullName>
    </recommendedName>
</protein>
<evidence type="ECO:0000255" key="1">
    <source>
        <dbReference type="HAMAP-Rule" id="MF_01143"/>
    </source>
</evidence>
<feature type="chain" id="PRO_1000065450" description="Holin-like protein CidA">
    <location>
        <begin position="1"/>
        <end position="131"/>
    </location>
</feature>
<feature type="transmembrane region" description="Helical" evidence="1">
    <location>
        <begin position="4"/>
        <end position="24"/>
    </location>
</feature>
<feature type="transmembrane region" description="Helical" evidence="1">
    <location>
        <begin position="30"/>
        <end position="50"/>
    </location>
</feature>
<feature type="transmembrane region" description="Helical" evidence="1">
    <location>
        <begin position="65"/>
        <end position="85"/>
    </location>
</feature>
<feature type="transmembrane region" description="Helical" evidence="1">
    <location>
        <begin position="88"/>
        <end position="108"/>
    </location>
</feature>
<organism>
    <name type="scientific">Staphylococcus aureus (strain Mu3 / ATCC 700698)</name>
    <dbReference type="NCBI Taxonomy" id="418127"/>
    <lineage>
        <taxon>Bacteria</taxon>
        <taxon>Bacillati</taxon>
        <taxon>Bacillota</taxon>
        <taxon>Bacilli</taxon>
        <taxon>Bacillales</taxon>
        <taxon>Staphylococcaceae</taxon>
        <taxon>Staphylococcus</taxon>
    </lineage>
</organism>
<sequence>MHKVQLIIKLLLQLGIIIVITYIGTEIQKIFHLPLAGSIVGLFLFYLLLQFKIVPLTWVEDGANFLLKTMVFFFIPSVVGIMDVASEITLNYILFFAVIIIGTCIVALSSGYIAEKMSVKHKHRKGVDAYE</sequence>
<name>CIDA_STAA1</name>
<proteinExistence type="inferred from homology"/>